<reference key="1">
    <citation type="submission" date="2006-12" db="EMBL/GenBank/DDBJ databases">
        <authorList>
            <person name="Fouts D.E."/>
            <person name="Nelson K.E."/>
            <person name="Sebastian Y."/>
        </authorList>
    </citation>
    <scope>NUCLEOTIDE SEQUENCE [LARGE SCALE GENOMIC DNA]</scope>
    <source>
        <strain>81-176</strain>
    </source>
</reference>
<organism>
    <name type="scientific">Campylobacter jejuni subsp. jejuni serotype O:23/36 (strain 81-176)</name>
    <dbReference type="NCBI Taxonomy" id="354242"/>
    <lineage>
        <taxon>Bacteria</taxon>
        <taxon>Pseudomonadati</taxon>
        <taxon>Campylobacterota</taxon>
        <taxon>Epsilonproteobacteria</taxon>
        <taxon>Campylobacterales</taxon>
        <taxon>Campylobacteraceae</taxon>
        <taxon>Campylobacter</taxon>
    </lineage>
</organism>
<feature type="chain" id="PRO_1000011595" description="GTPase Der">
    <location>
        <begin position="1"/>
        <end position="460"/>
    </location>
</feature>
<feature type="domain" description="EngA-type G 1">
    <location>
        <begin position="2"/>
        <end position="164"/>
    </location>
</feature>
<feature type="domain" description="EngA-type G 2">
    <location>
        <begin position="196"/>
        <end position="368"/>
    </location>
</feature>
<feature type="domain" description="KH-like" evidence="1">
    <location>
        <begin position="369"/>
        <end position="453"/>
    </location>
</feature>
<feature type="binding site" evidence="1">
    <location>
        <begin position="8"/>
        <end position="15"/>
    </location>
    <ligand>
        <name>GTP</name>
        <dbReference type="ChEBI" id="CHEBI:37565"/>
        <label>1</label>
    </ligand>
</feature>
<feature type="binding site" evidence="1">
    <location>
        <begin position="55"/>
        <end position="59"/>
    </location>
    <ligand>
        <name>GTP</name>
        <dbReference type="ChEBI" id="CHEBI:37565"/>
        <label>1</label>
    </ligand>
</feature>
<feature type="binding site" evidence="1">
    <location>
        <begin position="116"/>
        <end position="119"/>
    </location>
    <ligand>
        <name>GTP</name>
        <dbReference type="ChEBI" id="CHEBI:37565"/>
        <label>1</label>
    </ligand>
</feature>
<feature type="binding site" evidence="1">
    <location>
        <begin position="202"/>
        <end position="209"/>
    </location>
    <ligand>
        <name>GTP</name>
        <dbReference type="ChEBI" id="CHEBI:37565"/>
        <label>2</label>
    </ligand>
</feature>
<feature type="binding site" evidence="1">
    <location>
        <begin position="249"/>
        <end position="253"/>
    </location>
    <ligand>
        <name>GTP</name>
        <dbReference type="ChEBI" id="CHEBI:37565"/>
        <label>2</label>
    </ligand>
</feature>
<feature type="binding site" evidence="1">
    <location>
        <begin position="313"/>
        <end position="316"/>
    </location>
    <ligand>
        <name>GTP</name>
        <dbReference type="ChEBI" id="CHEBI:37565"/>
        <label>2</label>
    </ligand>
</feature>
<evidence type="ECO:0000255" key="1">
    <source>
        <dbReference type="HAMAP-Rule" id="MF_00195"/>
    </source>
</evidence>
<gene>
    <name evidence="1" type="primary">der</name>
    <name type="synonym">engA</name>
    <name type="ordered locus">CJJ81176_0409</name>
</gene>
<accession>A1VYA6</accession>
<sequence>MQSIILIGKPNVGKSSLFNRMARQRIAITSDISGTTRDTNKTQIHIHSKKAMLIDSGGLDESDELFKNVKKNTLKVAKESDIILYLVDGKLAPDDEDRQFFYSLKKLGKPIALVVNKVDNKKDEERAWEFANFGVKEIFNLSVTHNVGLDELYEWLEKFLHEEFLIPDEEENLEDFLEHYEEGKEFQFKEVDQNHIRVGIVGRVNVGKSSLLNALVKQERSVVSSIAGTTIDPVNESVVHKDKVIEFVDTAGIRKRGKIQGLERFALNRTEKILSHSQIALLVLDAHEGFNELDERIAGLVAKHYLGVIIVLNKWDKSEMDFDKTVKELRLDRFKFLAYAPVISVSALSGKRVHVLLDKILQIFENFTQKIQTSKLNTLIENATRAHPLPHDYGKLVKIYYAVQYDLAPPKIALIMNRPKALHFSYKRYLQNQIRKEFNFEGVPLVIASRKKGSKENDES</sequence>
<name>DER_CAMJJ</name>
<comment type="function">
    <text evidence="1">GTPase that plays an essential role in the late steps of ribosome biogenesis.</text>
</comment>
<comment type="subunit">
    <text evidence="1">Associates with the 50S ribosomal subunit.</text>
</comment>
<comment type="similarity">
    <text evidence="1">Belongs to the TRAFAC class TrmE-Era-EngA-EngB-Septin-like GTPase superfamily. EngA (Der) GTPase family.</text>
</comment>
<keyword id="KW-0342">GTP-binding</keyword>
<keyword id="KW-0547">Nucleotide-binding</keyword>
<keyword id="KW-0677">Repeat</keyword>
<keyword id="KW-0690">Ribosome biogenesis</keyword>
<dbReference type="EMBL" id="CP000538">
    <property type="protein sequence ID" value="EAQ73463.1"/>
    <property type="molecule type" value="Genomic_DNA"/>
</dbReference>
<dbReference type="RefSeq" id="WP_002854274.1">
    <property type="nucleotide sequence ID" value="NC_008787.1"/>
</dbReference>
<dbReference type="SMR" id="A1VYA6"/>
<dbReference type="KEGG" id="cjj:CJJ81176_0409"/>
<dbReference type="eggNOG" id="COG1160">
    <property type="taxonomic scope" value="Bacteria"/>
</dbReference>
<dbReference type="HOGENOM" id="CLU_016077_6_2_7"/>
<dbReference type="Proteomes" id="UP000000646">
    <property type="component" value="Chromosome"/>
</dbReference>
<dbReference type="GO" id="GO:0005525">
    <property type="term" value="F:GTP binding"/>
    <property type="evidence" value="ECO:0007669"/>
    <property type="project" value="UniProtKB-UniRule"/>
</dbReference>
<dbReference type="GO" id="GO:0043022">
    <property type="term" value="F:ribosome binding"/>
    <property type="evidence" value="ECO:0007669"/>
    <property type="project" value="TreeGrafter"/>
</dbReference>
<dbReference type="GO" id="GO:0042254">
    <property type="term" value="P:ribosome biogenesis"/>
    <property type="evidence" value="ECO:0007669"/>
    <property type="project" value="UniProtKB-KW"/>
</dbReference>
<dbReference type="CDD" id="cd01894">
    <property type="entry name" value="EngA1"/>
    <property type="match status" value="1"/>
</dbReference>
<dbReference type="CDD" id="cd01895">
    <property type="entry name" value="EngA2"/>
    <property type="match status" value="1"/>
</dbReference>
<dbReference type="FunFam" id="3.30.300.20:FF:000004">
    <property type="entry name" value="GTPase Der"/>
    <property type="match status" value="1"/>
</dbReference>
<dbReference type="Gene3D" id="3.30.300.20">
    <property type="match status" value="1"/>
</dbReference>
<dbReference type="Gene3D" id="3.40.50.300">
    <property type="entry name" value="P-loop containing nucleotide triphosphate hydrolases"/>
    <property type="match status" value="2"/>
</dbReference>
<dbReference type="HAMAP" id="MF_00195">
    <property type="entry name" value="GTPase_Der"/>
    <property type="match status" value="1"/>
</dbReference>
<dbReference type="InterPro" id="IPR031166">
    <property type="entry name" value="G_ENGA"/>
</dbReference>
<dbReference type="InterPro" id="IPR006073">
    <property type="entry name" value="GTP-bd"/>
</dbReference>
<dbReference type="InterPro" id="IPR016484">
    <property type="entry name" value="GTPase_Der"/>
</dbReference>
<dbReference type="InterPro" id="IPR032859">
    <property type="entry name" value="KH_dom-like"/>
</dbReference>
<dbReference type="InterPro" id="IPR015946">
    <property type="entry name" value="KH_dom-like_a/b"/>
</dbReference>
<dbReference type="InterPro" id="IPR027417">
    <property type="entry name" value="P-loop_NTPase"/>
</dbReference>
<dbReference type="InterPro" id="IPR005225">
    <property type="entry name" value="Small_GTP-bd"/>
</dbReference>
<dbReference type="NCBIfam" id="TIGR03594">
    <property type="entry name" value="GTPase_EngA"/>
    <property type="match status" value="1"/>
</dbReference>
<dbReference type="NCBIfam" id="TIGR00231">
    <property type="entry name" value="small_GTP"/>
    <property type="match status" value="2"/>
</dbReference>
<dbReference type="PANTHER" id="PTHR43834">
    <property type="entry name" value="GTPASE DER"/>
    <property type="match status" value="1"/>
</dbReference>
<dbReference type="PANTHER" id="PTHR43834:SF6">
    <property type="entry name" value="GTPASE DER"/>
    <property type="match status" value="1"/>
</dbReference>
<dbReference type="Pfam" id="PF14714">
    <property type="entry name" value="KH_dom-like"/>
    <property type="match status" value="1"/>
</dbReference>
<dbReference type="Pfam" id="PF01926">
    <property type="entry name" value="MMR_HSR1"/>
    <property type="match status" value="2"/>
</dbReference>
<dbReference type="PIRSF" id="PIRSF006485">
    <property type="entry name" value="GTP-binding_EngA"/>
    <property type="match status" value="1"/>
</dbReference>
<dbReference type="PRINTS" id="PR00326">
    <property type="entry name" value="GTP1OBG"/>
</dbReference>
<dbReference type="SUPFAM" id="SSF52540">
    <property type="entry name" value="P-loop containing nucleoside triphosphate hydrolases"/>
    <property type="match status" value="2"/>
</dbReference>
<dbReference type="PROSITE" id="PS51712">
    <property type="entry name" value="G_ENGA"/>
    <property type="match status" value="2"/>
</dbReference>
<protein>
    <recommendedName>
        <fullName evidence="1">GTPase Der</fullName>
    </recommendedName>
    <alternativeName>
        <fullName evidence="1">GTP-binding protein EngA</fullName>
    </alternativeName>
</protein>
<proteinExistence type="inferred from homology"/>